<feature type="chain" id="PRO_0000205306" description="Deoxyguanosinetriphosphate triphosphohydrolase-like protein">
    <location>
        <begin position="1"/>
        <end position="381"/>
    </location>
</feature>
<feature type="domain" description="HD" evidence="2">
    <location>
        <begin position="76"/>
        <end position="203"/>
    </location>
</feature>
<gene>
    <name type="ordered locus">LA_2274</name>
</gene>
<keyword id="KW-0378">Hydrolase</keyword>
<keyword id="KW-1185">Reference proteome</keyword>
<name>DGTL1_LEPIN</name>
<evidence type="ECO:0000255" key="1">
    <source>
        <dbReference type="HAMAP-Rule" id="MF_01212"/>
    </source>
</evidence>
<evidence type="ECO:0000255" key="2">
    <source>
        <dbReference type="PROSITE-ProRule" id="PRU01175"/>
    </source>
</evidence>
<evidence type="ECO:0000305" key="3"/>
<proteinExistence type="inferred from homology"/>
<organism>
    <name type="scientific">Leptospira interrogans serogroup Icterohaemorrhagiae serovar Lai (strain 56601)</name>
    <dbReference type="NCBI Taxonomy" id="189518"/>
    <lineage>
        <taxon>Bacteria</taxon>
        <taxon>Pseudomonadati</taxon>
        <taxon>Spirochaetota</taxon>
        <taxon>Spirochaetia</taxon>
        <taxon>Leptospirales</taxon>
        <taxon>Leptospiraceae</taxon>
        <taxon>Leptospira</taxon>
    </lineage>
</organism>
<reference key="1">
    <citation type="journal article" date="2003" name="Nature">
        <title>Unique physiological and pathogenic features of Leptospira interrogans revealed by whole-genome sequencing.</title>
        <authorList>
            <person name="Ren S.-X."/>
            <person name="Fu G."/>
            <person name="Jiang X.-G."/>
            <person name="Zeng R."/>
            <person name="Miao Y.-G."/>
            <person name="Xu H."/>
            <person name="Zhang Y.-X."/>
            <person name="Xiong H."/>
            <person name="Lu G."/>
            <person name="Lu L.-F."/>
            <person name="Jiang H.-Q."/>
            <person name="Jia J."/>
            <person name="Tu Y.-F."/>
            <person name="Jiang J.-X."/>
            <person name="Gu W.-Y."/>
            <person name="Zhang Y.-Q."/>
            <person name="Cai Z."/>
            <person name="Sheng H.-H."/>
            <person name="Yin H.-F."/>
            <person name="Zhang Y."/>
            <person name="Zhu G.-F."/>
            <person name="Wan M."/>
            <person name="Huang H.-L."/>
            <person name="Qian Z."/>
            <person name="Wang S.-Y."/>
            <person name="Ma W."/>
            <person name="Yao Z.-J."/>
            <person name="Shen Y."/>
            <person name="Qiang B.-Q."/>
            <person name="Xia Q.-C."/>
            <person name="Guo X.-K."/>
            <person name="Danchin A."/>
            <person name="Saint Girons I."/>
            <person name="Somerville R.L."/>
            <person name="Wen Y.-M."/>
            <person name="Shi M.-H."/>
            <person name="Chen Z."/>
            <person name="Xu J.-G."/>
            <person name="Zhao G.-P."/>
        </authorList>
    </citation>
    <scope>NUCLEOTIDE SEQUENCE [LARGE SCALE GENOMIC DNA]</scope>
    <source>
        <strain>56601</strain>
    </source>
</reference>
<comment type="similarity">
    <text evidence="1">Belongs to the dGTPase family. Type 2 subfamily.</text>
</comment>
<comment type="sequence caution" evidence="3">
    <conflict type="erroneous initiation">
        <sequence resource="EMBL-CDS" id="AAN49473"/>
    </conflict>
    <text>Truncated N-terminus.</text>
</comment>
<dbReference type="EMBL" id="AE010300">
    <property type="protein sequence ID" value="AAN49473.2"/>
    <property type="status" value="ALT_INIT"/>
    <property type="molecule type" value="Genomic_DNA"/>
</dbReference>
<dbReference type="RefSeq" id="NP_712455.2">
    <property type="nucleotide sequence ID" value="NC_004342.2"/>
</dbReference>
<dbReference type="RefSeq" id="WP_000273947.1">
    <property type="nucleotide sequence ID" value="NC_004342.2"/>
</dbReference>
<dbReference type="SMR" id="Q8F3X5"/>
<dbReference type="STRING" id="189518.LA_2274"/>
<dbReference type="PaxDb" id="189518-LA_2274"/>
<dbReference type="EnsemblBacteria" id="AAN49473">
    <property type="protein sequence ID" value="AAN49473"/>
    <property type="gene ID" value="LA_2274"/>
</dbReference>
<dbReference type="KEGG" id="lil:LA_2274"/>
<dbReference type="PATRIC" id="fig|189518.3.peg.2261"/>
<dbReference type="HOGENOM" id="CLU_028163_1_0_12"/>
<dbReference type="InParanoid" id="Q8F3X5"/>
<dbReference type="OrthoDB" id="9803619at2"/>
<dbReference type="Proteomes" id="UP000001408">
    <property type="component" value="Chromosome I"/>
</dbReference>
<dbReference type="GO" id="GO:0008832">
    <property type="term" value="F:dGTPase activity"/>
    <property type="evidence" value="ECO:0000318"/>
    <property type="project" value="GO_Central"/>
</dbReference>
<dbReference type="GO" id="GO:0006203">
    <property type="term" value="P:dGTP catabolic process"/>
    <property type="evidence" value="ECO:0000318"/>
    <property type="project" value="GO_Central"/>
</dbReference>
<dbReference type="CDD" id="cd00077">
    <property type="entry name" value="HDc"/>
    <property type="match status" value="1"/>
</dbReference>
<dbReference type="FunFam" id="1.10.3210.10:FF:000024">
    <property type="entry name" value="Deoxyguanosinetriphosphate triphosphohydrolase-like protein"/>
    <property type="match status" value="1"/>
</dbReference>
<dbReference type="Gene3D" id="1.10.3210.10">
    <property type="entry name" value="Hypothetical protein af1432"/>
    <property type="match status" value="1"/>
</dbReference>
<dbReference type="HAMAP" id="MF_01212">
    <property type="entry name" value="dGTPase_type2"/>
    <property type="match status" value="1"/>
</dbReference>
<dbReference type="InterPro" id="IPR006261">
    <property type="entry name" value="dGTPase"/>
</dbReference>
<dbReference type="InterPro" id="IPR051094">
    <property type="entry name" value="Diverse_Catalytic_Enzymes"/>
</dbReference>
<dbReference type="InterPro" id="IPR023023">
    <property type="entry name" value="dNTPase_2"/>
</dbReference>
<dbReference type="InterPro" id="IPR003607">
    <property type="entry name" value="HD/PDEase_dom"/>
</dbReference>
<dbReference type="InterPro" id="IPR006674">
    <property type="entry name" value="HD_domain"/>
</dbReference>
<dbReference type="InterPro" id="IPR026875">
    <property type="entry name" value="PHydrolase_assoc_dom"/>
</dbReference>
<dbReference type="NCBIfam" id="TIGR01353">
    <property type="entry name" value="dGTP_triPase"/>
    <property type="match status" value="1"/>
</dbReference>
<dbReference type="NCBIfam" id="NF002326">
    <property type="entry name" value="PRK01286.1-1"/>
    <property type="match status" value="1"/>
</dbReference>
<dbReference type="PANTHER" id="PTHR35795:SF1">
    <property type="entry name" value="BIS(5'-NUCLEOSYL)-TETRAPHOSPHATASE, SYMMETRICAL"/>
    <property type="match status" value="1"/>
</dbReference>
<dbReference type="PANTHER" id="PTHR35795">
    <property type="entry name" value="SLR1885 PROTEIN"/>
    <property type="match status" value="1"/>
</dbReference>
<dbReference type="Pfam" id="PF01966">
    <property type="entry name" value="HD"/>
    <property type="match status" value="1"/>
</dbReference>
<dbReference type="Pfam" id="PF13286">
    <property type="entry name" value="HD_assoc"/>
    <property type="match status" value="1"/>
</dbReference>
<dbReference type="SMART" id="SM00471">
    <property type="entry name" value="HDc"/>
    <property type="match status" value="1"/>
</dbReference>
<dbReference type="SUPFAM" id="SSF109604">
    <property type="entry name" value="HD-domain/PDEase-like"/>
    <property type="match status" value="1"/>
</dbReference>
<dbReference type="PROSITE" id="PS51831">
    <property type="entry name" value="HD"/>
    <property type="match status" value="1"/>
</dbReference>
<sequence length="381" mass="44416">MYFSRDDLLQKETETLAPYAISNANNGGRIYEEEEHSYRLPFQRDRDRILHSSAFKRLQYKTQVFIFSVGENYRNRMTHTLEVAGLSRTIASALGLNSLLSESIALAHDLGHTPFGHAGQEILSGLMKDYGGFEHNKQSLRIVTSIEKKYPNFPGLNLCRETLKGLMKHGADYDSSVILLERKENGPSLEGMIADLSDEIAYTNHDIEDGWEMGYLHLGDLLENPFWKEVYEECKDQYKEVGEKILIRTSIRTLTNFLVSDLIQNIAHRLEKKQIKSTEDLALLWKQDFRIASFSKEVDLKFRELKSFLYEKLYRHEDLIRMSDYGKKIIESLFDYFLKHPEKIPDTYKERIEEESLYRVISDYVAGMTDRYAEKIYQSLP</sequence>
<protein>
    <recommendedName>
        <fullName evidence="1">Deoxyguanosinetriphosphate triphosphohydrolase-like protein</fullName>
    </recommendedName>
</protein>
<accession>Q8F3X5</accession>